<gene>
    <name type="primary">HBAD</name>
</gene>
<keyword id="KW-0903">Direct protein sequencing</keyword>
<keyword id="KW-0349">Heme</keyword>
<keyword id="KW-0408">Iron</keyword>
<keyword id="KW-0479">Metal-binding</keyword>
<keyword id="KW-0561">Oxygen transport</keyword>
<keyword id="KW-1185">Reference proteome</keyword>
<keyword id="KW-0813">Transport</keyword>
<sequence>MLTAEDKKLIQQAWEKASSHQEDFGAEALLRMFTAYPQTKTYFPHFDLSPGSDQIRGHGKKVLAALGNAVKNIDDLSQAMAELSNLHAFNLRVDPVNFKLLSQCIQVVLAAHMGKDYSPEVHAAFDKFLSAVAAVLAGKYR</sequence>
<comment type="function">
    <text>Involved in oxygen transport from the lung to the various peripheral tissues.</text>
</comment>
<comment type="subunit">
    <text>Heterotetramer of two alpha-D chains and two beta chains.</text>
</comment>
<comment type="tissue specificity">
    <text>Red blood cells.</text>
</comment>
<comment type="developmental stage">
    <text>In birds, the alpha-D chain occurs in a minor hemoglobin component, called hemoglobin d, which is expressed in late embryonic and adult life.</text>
</comment>
<comment type="similarity">
    <text evidence="1">Belongs to the globin family.</text>
</comment>
<feature type="chain" id="PRO_0000052826" description="Hemoglobin subunit alpha-D">
    <location>
        <begin position="1"/>
        <end position="141"/>
    </location>
</feature>
<feature type="domain" description="Globin" evidence="1">
    <location>
        <begin position="1"/>
        <end position="141"/>
    </location>
</feature>
<feature type="binding site" description="distal binding residue">
    <location>
        <position position="58"/>
    </location>
    <ligand>
        <name>heme b</name>
        <dbReference type="ChEBI" id="CHEBI:60344"/>
    </ligand>
    <ligandPart>
        <name>Fe</name>
        <dbReference type="ChEBI" id="CHEBI:18248"/>
    </ligandPart>
</feature>
<feature type="binding site" description="proximal binding residue">
    <location>
        <position position="87"/>
    </location>
    <ligand>
        <name>heme b</name>
        <dbReference type="ChEBI" id="CHEBI:60344"/>
    </ligand>
    <ligandPart>
        <name>Fe</name>
        <dbReference type="ChEBI" id="CHEBI:18248"/>
    </ligandPart>
</feature>
<name>HBAD_COTJA</name>
<protein>
    <recommendedName>
        <fullName>Hemoglobin subunit alpha-D</fullName>
    </recommendedName>
    <alternativeName>
        <fullName>Alpha-D-globin</fullName>
    </alternativeName>
    <alternativeName>
        <fullName>Hemoglobin alpha-D chain</fullName>
    </alternativeName>
</protein>
<evidence type="ECO:0000255" key="1">
    <source>
        <dbReference type="PROSITE-ProRule" id="PRU00238"/>
    </source>
</evidence>
<organism>
    <name type="scientific">Coturnix japonica</name>
    <name type="common">Japanese quail</name>
    <name type="synonym">Coturnix coturnix japonica</name>
    <dbReference type="NCBI Taxonomy" id="93934"/>
    <lineage>
        <taxon>Eukaryota</taxon>
        <taxon>Metazoa</taxon>
        <taxon>Chordata</taxon>
        <taxon>Craniata</taxon>
        <taxon>Vertebrata</taxon>
        <taxon>Euteleostomi</taxon>
        <taxon>Archelosauria</taxon>
        <taxon>Archosauria</taxon>
        <taxon>Dinosauria</taxon>
        <taxon>Saurischia</taxon>
        <taxon>Theropoda</taxon>
        <taxon>Coelurosauria</taxon>
        <taxon>Aves</taxon>
        <taxon>Neognathae</taxon>
        <taxon>Galloanserae</taxon>
        <taxon>Galliformes</taxon>
        <taxon>Phasianidae</taxon>
        <taxon>Perdicinae</taxon>
        <taxon>Coturnix</taxon>
    </lineage>
</organism>
<accession>P30892</accession>
<dbReference type="PIR" id="S29168">
    <property type="entry name" value="S29168"/>
</dbReference>
<dbReference type="SMR" id="P30892"/>
<dbReference type="Proteomes" id="UP000694412">
    <property type="component" value="Unplaced"/>
</dbReference>
<dbReference type="GO" id="GO:0072562">
    <property type="term" value="C:blood microparticle"/>
    <property type="evidence" value="ECO:0007669"/>
    <property type="project" value="TreeGrafter"/>
</dbReference>
<dbReference type="GO" id="GO:0031838">
    <property type="term" value="C:haptoglobin-hemoglobin complex"/>
    <property type="evidence" value="ECO:0007669"/>
    <property type="project" value="TreeGrafter"/>
</dbReference>
<dbReference type="GO" id="GO:0005833">
    <property type="term" value="C:hemoglobin complex"/>
    <property type="evidence" value="ECO:0007669"/>
    <property type="project" value="InterPro"/>
</dbReference>
<dbReference type="GO" id="GO:0031720">
    <property type="term" value="F:haptoglobin binding"/>
    <property type="evidence" value="ECO:0007669"/>
    <property type="project" value="TreeGrafter"/>
</dbReference>
<dbReference type="GO" id="GO:0020037">
    <property type="term" value="F:heme binding"/>
    <property type="evidence" value="ECO:0007669"/>
    <property type="project" value="InterPro"/>
</dbReference>
<dbReference type="GO" id="GO:0005506">
    <property type="term" value="F:iron ion binding"/>
    <property type="evidence" value="ECO:0007669"/>
    <property type="project" value="InterPro"/>
</dbReference>
<dbReference type="GO" id="GO:0043177">
    <property type="term" value="F:organic acid binding"/>
    <property type="evidence" value="ECO:0007669"/>
    <property type="project" value="TreeGrafter"/>
</dbReference>
<dbReference type="GO" id="GO:0019825">
    <property type="term" value="F:oxygen binding"/>
    <property type="evidence" value="ECO:0007669"/>
    <property type="project" value="InterPro"/>
</dbReference>
<dbReference type="GO" id="GO:0005344">
    <property type="term" value="F:oxygen carrier activity"/>
    <property type="evidence" value="ECO:0007669"/>
    <property type="project" value="UniProtKB-KW"/>
</dbReference>
<dbReference type="GO" id="GO:0004601">
    <property type="term" value="F:peroxidase activity"/>
    <property type="evidence" value="ECO:0007669"/>
    <property type="project" value="TreeGrafter"/>
</dbReference>
<dbReference type="GO" id="GO:0042744">
    <property type="term" value="P:hydrogen peroxide catabolic process"/>
    <property type="evidence" value="ECO:0007669"/>
    <property type="project" value="TreeGrafter"/>
</dbReference>
<dbReference type="CDD" id="cd08927">
    <property type="entry name" value="Hb-alpha-like"/>
    <property type="match status" value="1"/>
</dbReference>
<dbReference type="FunFam" id="1.10.490.10:FF:000002">
    <property type="entry name" value="Hemoglobin subunit alpha"/>
    <property type="match status" value="1"/>
</dbReference>
<dbReference type="Gene3D" id="1.10.490.10">
    <property type="entry name" value="Globins"/>
    <property type="match status" value="1"/>
</dbReference>
<dbReference type="InterPro" id="IPR000971">
    <property type="entry name" value="Globin"/>
</dbReference>
<dbReference type="InterPro" id="IPR009050">
    <property type="entry name" value="Globin-like_sf"/>
</dbReference>
<dbReference type="InterPro" id="IPR012292">
    <property type="entry name" value="Globin/Proto"/>
</dbReference>
<dbReference type="InterPro" id="IPR002338">
    <property type="entry name" value="Hemoglobin_a-typ"/>
</dbReference>
<dbReference type="InterPro" id="IPR050056">
    <property type="entry name" value="Hemoglobin_oxygen_transport"/>
</dbReference>
<dbReference type="InterPro" id="IPR002339">
    <property type="entry name" value="Hemoglobin_pi"/>
</dbReference>
<dbReference type="PANTHER" id="PTHR11442">
    <property type="entry name" value="HEMOGLOBIN FAMILY MEMBER"/>
    <property type="match status" value="1"/>
</dbReference>
<dbReference type="PANTHER" id="PTHR11442:SF41">
    <property type="entry name" value="HEMOGLOBIN SUBUNIT ZETA"/>
    <property type="match status" value="1"/>
</dbReference>
<dbReference type="Pfam" id="PF00042">
    <property type="entry name" value="Globin"/>
    <property type="match status" value="1"/>
</dbReference>
<dbReference type="PRINTS" id="PR00612">
    <property type="entry name" value="ALPHAHAEM"/>
</dbReference>
<dbReference type="PRINTS" id="PR00815">
    <property type="entry name" value="PIHAEM"/>
</dbReference>
<dbReference type="SUPFAM" id="SSF46458">
    <property type="entry name" value="Globin-like"/>
    <property type="match status" value="1"/>
</dbReference>
<dbReference type="PROSITE" id="PS01033">
    <property type="entry name" value="GLOBIN"/>
    <property type="match status" value="1"/>
</dbReference>
<reference key="1">
    <citation type="journal article" date="1993" name="Biol. Chem. Hoppe-Seyler">
        <title>Amino-acid sequence of the alpha D- and beta-polypeptide chains of the Japanese quail hemoglobin.</title>
        <authorList>
            <person name="Eguchi Y."/>
            <person name="Nakashima Y."/>
            <person name="Takei H."/>
        </authorList>
    </citation>
    <scope>PROTEIN SEQUENCE</scope>
    <source>
        <tissue>Erythrocyte</tissue>
    </source>
</reference>
<proteinExistence type="evidence at protein level"/>